<protein>
    <recommendedName>
        <fullName evidence="1">4-hydroxy-3-methylbut-2-enyl diphosphate reductase</fullName>
        <shortName evidence="1">HMBPP reductase</shortName>
        <ecNumber evidence="1">1.17.7.4</ecNumber>
    </recommendedName>
</protein>
<name>ISPH_AERHH</name>
<evidence type="ECO:0000255" key="1">
    <source>
        <dbReference type="HAMAP-Rule" id="MF_00191"/>
    </source>
</evidence>
<accession>A0KG42</accession>
<reference key="1">
    <citation type="journal article" date="2006" name="J. Bacteriol.">
        <title>Genome sequence of Aeromonas hydrophila ATCC 7966T: jack of all trades.</title>
        <authorList>
            <person name="Seshadri R."/>
            <person name="Joseph S.W."/>
            <person name="Chopra A.K."/>
            <person name="Sha J."/>
            <person name="Shaw J."/>
            <person name="Graf J."/>
            <person name="Haft D.H."/>
            <person name="Wu M."/>
            <person name="Ren Q."/>
            <person name="Rosovitz M.J."/>
            <person name="Madupu R."/>
            <person name="Tallon L."/>
            <person name="Kim M."/>
            <person name="Jin S."/>
            <person name="Vuong H."/>
            <person name="Stine O.C."/>
            <person name="Ali A."/>
            <person name="Horneman A.J."/>
            <person name="Heidelberg J.F."/>
        </authorList>
    </citation>
    <scope>NUCLEOTIDE SEQUENCE [LARGE SCALE GENOMIC DNA]</scope>
    <source>
        <strain>ATCC 7966 / DSM 30187 / BCRC 13018 / CCUG 14551 / JCM 1027 / KCTC 2358 / NCIMB 9240 / NCTC 8049</strain>
    </source>
</reference>
<feature type="chain" id="PRO_1000021080" description="4-hydroxy-3-methylbut-2-enyl diphosphate reductase">
    <location>
        <begin position="1"/>
        <end position="311"/>
    </location>
</feature>
<feature type="active site" description="Proton donor" evidence="1">
    <location>
        <position position="126"/>
    </location>
</feature>
<feature type="binding site" evidence="1">
    <location>
        <position position="12"/>
    </location>
    <ligand>
        <name>[4Fe-4S] cluster</name>
        <dbReference type="ChEBI" id="CHEBI:49883"/>
    </ligand>
</feature>
<feature type="binding site" evidence="1">
    <location>
        <position position="41"/>
    </location>
    <ligand>
        <name>(2E)-4-hydroxy-3-methylbut-2-enyl diphosphate</name>
        <dbReference type="ChEBI" id="CHEBI:128753"/>
    </ligand>
</feature>
<feature type="binding site" evidence="1">
    <location>
        <position position="41"/>
    </location>
    <ligand>
        <name>dimethylallyl diphosphate</name>
        <dbReference type="ChEBI" id="CHEBI:57623"/>
    </ligand>
</feature>
<feature type="binding site" evidence="1">
    <location>
        <position position="41"/>
    </location>
    <ligand>
        <name>isopentenyl diphosphate</name>
        <dbReference type="ChEBI" id="CHEBI:128769"/>
    </ligand>
</feature>
<feature type="binding site" evidence="1">
    <location>
        <position position="74"/>
    </location>
    <ligand>
        <name>(2E)-4-hydroxy-3-methylbut-2-enyl diphosphate</name>
        <dbReference type="ChEBI" id="CHEBI:128753"/>
    </ligand>
</feature>
<feature type="binding site" evidence="1">
    <location>
        <position position="74"/>
    </location>
    <ligand>
        <name>dimethylallyl diphosphate</name>
        <dbReference type="ChEBI" id="CHEBI:57623"/>
    </ligand>
</feature>
<feature type="binding site" evidence="1">
    <location>
        <position position="74"/>
    </location>
    <ligand>
        <name>isopentenyl diphosphate</name>
        <dbReference type="ChEBI" id="CHEBI:128769"/>
    </ligand>
</feature>
<feature type="binding site" evidence="1">
    <location>
        <position position="96"/>
    </location>
    <ligand>
        <name>[4Fe-4S] cluster</name>
        <dbReference type="ChEBI" id="CHEBI:49883"/>
    </ligand>
</feature>
<feature type="binding site" evidence="1">
    <location>
        <position position="124"/>
    </location>
    <ligand>
        <name>(2E)-4-hydroxy-3-methylbut-2-enyl diphosphate</name>
        <dbReference type="ChEBI" id="CHEBI:128753"/>
    </ligand>
</feature>
<feature type="binding site" evidence="1">
    <location>
        <position position="124"/>
    </location>
    <ligand>
        <name>dimethylallyl diphosphate</name>
        <dbReference type="ChEBI" id="CHEBI:57623"/>
    </ligand>
</feature>
<feature type="binding site" evidence="1">
    <location>
        <position position="124"/>
    </location>
    <ligand>
        <name>isopentenyl diphosphate</name>
        <dbReference type="ChEBI" id="CHEBI:128769"/>
    </ligand>
</feature>
<feature type="binding site" evidence="1">
    <location>
        <position position="167"/>
    </location>
    <ligand>
        <name>(2E)-4-hydroxy-3-methylbut-2-enyl diphosphate</name>
        <dbReference type="ChEBI" id="CHEBI:128753"/>
    </ligand>
</feature>
<feature type="binding site" evidence="1">
    <location>
        <position position="197"/>
    </location>
    <ligand>
        <name>[4Fe-4S] cluster</name>
        <dbReference type="ChEBI" id="CHEBI:49883"/>
    </ligand>
</feature>
<feature type="binding site" evidence="1">
    <location>
        <position position="225"/>
    </location>
    <ligand>
        <name>(2E)-4-hydroxy-3-methylbut-2-enyl diphosphate</name>
        <dbReference type="ChEBI" id="CHEBI:128753"/>
    </ligand>
</feature>
<feature type="binding site" evidence="1">
    <location>
        <position position="225"/>
    </location>
    <ligand>
        <name>dimethylallyl diphosphate</name>
        <dbReference type="ChEBI" id="CHEBI:57623"/>
    </ligand>
</feature>
<feature type="binding site" evidence="1">
    <location>
        <position position="225"/>
    </location>
    <ligand>
        <name>isopentenyl diphosphate</name>
        <dbReference type="ChEBI" id="CHEBI:128769"/>
    </ligand>
</feature>
<feature type="binding site" evidence="1">
    <location>
        <position position="226"/>
    </location>
    <ligand>
        <name>(2E)-4-hydroxy-3-methylbut-2-enyl diphosphate</name>
        <dbReference type="ChEBI" id="CHEBI:128753"/>
    </ligand>
</feature>
<feature type="binding site" evidence="1">
    <location>
        <position position="226"/>
    </location>
    <ligand>
        <name>dimethylallyl diphosphate</name>
        <dbReference type="ChEBI" id="CHEBI:57623"/>
    </ligand>
</feature>
<feature type="binding site" evidence="1">
    <location>
        <position position="226"/>
    </location>
    <ligand>
        <name>isopentenyl diphosphate</name>
        <dbReference type="ChEBI" id="CHEBI:128769"/>
    </ligand>
</feature>
<feature type="binding site" evidence="1">
    <location>
        <position position="227"/>
    </location>
    <ligand>
        <name>(2E)-4-hydroxy-3-methylbut-2-enyl diphosphate</name>
        <dbReference type="ChEBI" id="CHEBI:128753"/>
    </ligand>
</feature>
<feature type="binding site" evidence="1">
    <location>
        <position position="227"/>
    </location>
    <ligand>
        <name>dimethylallyl diphosphate</name>
        <dbReference type="ChEBI" id="CHEBI:57623"/>
    </ligand>
</feature>
<feature type="binding site" evidence="1">
    <location>
        <position position="227"/>
    </location>
    <ligand>
        <name>isopentenyl diphosphate</name>
        <dbReference type="ChEBI" id="CHEBI:128769"/>
    </ligand>
</feature>
<feature type="binding site" evidence="1">
    <location>
        <position position="269"/>
    </location>
    <ligand>
        <name>(2E)-4-hydroxy-3-methylbut-2-enyl diphosphate</name>
        <dbReference type="ChEBI" id="CHEBI:128753"/>
    </ligand>
</feature>
<feature type="binding site" evidence="1">
    <location>
        <position position="269"/>
    </location>
    <ligand>
        <name>dimethylallyl diphosphate</name>
        <dbReference type="ChEBI" id="CHEBI:57623"/>
    </ligand>
</feature>
<feature type="binding site" evidence="1">
    <location>
        <position position="269"/>
    </location>
    <ligand>
        <name>isopentenyl diphosphate</name>
        <dbReference type="ChEBI" id="CHEBI:128769"/>
    </ligand>
</feature>
<sequence length="311" mass="33890">MNILLANPRGFCAGVDRAISIVESALEKFGAPIYVRHEVVHNRYVVNKLKEAGAVFVEELDEVPDDSIVIFSAHGVSKAVREMAKSRALKVFDATCPLVTKVHMEVHRASRKGSEAVLIGHAGHPEVIGTMGQYENREGGMYLVETPEDVAKLKVKNPDDLCFVTQTTLSVDETSDVIDALRAHFPKIQGPRKDDICYATQNRQDAVREMAGLVDAMLVVGSRNSSNSNRLRELAEKVGAKAYLIDDASMIEADWLAGVEAIGVTAGASAPEVLVQSVITRLRELGGKVVAEHPGREENVVFEVPPELRIL</sequence>
<proteinExistence type="inferred from homology"/>
<keyword id="KW-0004">4Fe-4S</keyword>
<keyword id="KW-0408">Iron</keyword>
<keyword id="KW-0411">Iron-sulfur</keyword>
<keyword id="KW-0414">Isoprene biosynthesis</keyword>
<keyword id="KW-0479">Metal-binding</keyword>
<keyword id="KW-0560">Oxidoreductase</keyword>
<keyword id="KW-1185">Reference proteome</keyword>
<gene>
    <name evidence="1" type="primary">ispH</name>
    <name type="ordered locus">AHA_0685</name>
</gene>
<dbReference type="EC" id="1.17.7.4" evidence="1"/>
<dbReference type="EMBL" id="CP000462">
    <property type="protein sequence ID" value="ABK37944.1"/>
    <property type="molecule type" value="Genomic_DNA"/>
</dbReference>
<dbReference type="RefSeq" id="WP_011704646.1">
    <property type="nucleotide sequence ID" value="NC_008570.1"/>
</dbReference>
<dbReference type="RefSeq" id="YP_855227.1">
    <property type="nucleotide sequence ID" value="NC_008570.1"/>
</dbReference>
<dbReference type="SMR" id="A0KG42"/>
<dbReference type="STRING" id="380703.AHA_0685"/>
<dbReference type="EnsemblBacteria" id="ABK37944">
    <property type="protein sequence ID" value="ABK37944"/>
    <property type="gene ID" value="AHA_0685"/>
</dbReference>
<dbReference type="GeneID" id="4487677"/>
<dbReference type="KEGG" id="aha:AHA_0685"/>
<dbReference type="PATRIC" id="fig|380703.7.peg.687"/>
<dbReference type="eggNOG" id="COG0761">
    <property type="taxonomic scope" value="Bacteria"/>
</dbReference>
<dbReference type="HOGENOM" id="CLU_027486_1_0_6"/>
<dbReference type="OrthoDB" id="9804068at2"/>
<dbReference type="UniPathway" id="UPA00056">
    <property type="reaction ID" value="UER00097"/>
</dbReference>
<dbReference type="UniPathway" id="UPA00059">
    <property type="reaction ID" value="UER00105"/>
</dbReference>
<dbReference type="Proteomes" id="UP000000756">
    <property type="component" value="Chromosome"/>
</dbReference>
<dbReference type="GO" id="GO:0051539">
    <property type="term" value="F:4 iron, 4 sulfur cluster binding"/>
    <property type="evidence" value="ECO:0007669"/>
    <property type="project" value="UniProtKB-UniRule"/>
</dbReference>
<dbReference type="GO" id="GO:0051745">
    <property type="term" value="F:4-hydroxy-3-methylbut-2-enyl diphosphate reductase activity"/>
    <property type="evidence" value="ECO:0007669"/>
    <property type="project" value="UniProtKB-UniRule"/>
</dbReference>
<dbReference type="GO" id="GO:0046872">
    <property type="term" value="F:metal ion binding"/>
    <property type="evidence" value="ECO:0007669"/>
    <property type="project" value="UniProtKB-KW"/>
</dbReference>
<dbReference type="GO" id="GO:0050992">
    <property type="term" value="P:dimethylallyl diphosphate biosynthetic process"/>
    <property type="evidence" value="ECO:0007669"/>
    <property type="project" value="UniProtKB-UniRule"/>
</dbReference>
<dbReference type="GO" id="GO:0019288">
    <property type="term" value="P:isopentenyl diphosphate biosynthetic process, methylerythritol 4-phosphate pathway"/>
    <property type="evidence" value="ECO:0007669"/>
    <property type="project" value="UniProtKB-UniRule"/>
</dbReference>
<dbReference type="GO" id="GO:0016114">
    <property type="term" value="P:terpenoid biosynthetic process"/>
    <property type="evidence" value="ECO:0007669"/>
    <property type="project" value="UniProtKB-UniRule"/>
</dbReference>
<dbReference type="CDD" id="cd13944">
    <property type="entry name" value="lytB_ispH"/>
    <property type="match status" value="1"/>
</dbReference>
<dbReference type="Gene3D" id="3.40.50.11270">
    <property type="match status" value="1"/>
</dbReference>
<dbReference type="Gene3D" id="3.40.1010.20">
    <property type="entry name" value="4-hydroxy-3-methylbut-2-enyl diphosphate reductase, catalytic domain"/>
    <property type="match status" value="2"/>
</dbReference>
<dbReference type="HAMAP" id="MF_00191">
    <property type="entry name" value="IspH"/>
    <property type="match status" value="1"/>
</dbReference>
<dbReference type="InterPro" id="IPR003451">
    <property type="entry name" value="LytB/IspH"/>
</dbReference>
<dbReference type="NCBIfam" id="TIGR00216">
    <property type="entry name" value="ispH_lytB"/>
    <property type="match status" value="1"/>
</dbReference>
<dbReference type="NCBIfam" id="NF002188">
    <property type="entry name" value="PRK01045.1-2"/>
    <property type="match status" value="1"/>
</dbReference>
<dbReference type="NCBIfam" id="NF002190">
    <property type="entry name" value="PRK01045.1-4"/>
    <property type="match status" value="1"/>
</dbReference>
<dbReference type="PANTHER" id="PTHR30426">
    <property type="entry name" value="4-HYDROXY-3-METHYLBUT-2-ENYL DIPHOSPHATE REDUCTASE"/>
    <property type="match status" value="1"/>
</dbReference>
<dbReference type="PANTHER" id="PTHR30426:SF0">
    <property type="entry name" value="4-HYDROXY-3-METHYLBUT-2-ENYL DIPHOSPHATE REDUCTASE"/>
    <property type="match status" value="1"/>
</dbReference>
<dbReference type="Pfam" id="PF02401">
    <property type="entry name" value="LYTB"/>
    <property type="match status" value="1"/>
</dbReference>
<organism>
    <name type="scientific">Aeromonas hydrophila subsp. hydrophila (strain ATCC 7966 / DSM 30187 / BCRC 13018 / CCUG 14551 / JCM 1027 / KCTC 2358 / NCIMB 9240 / NCTC 8049)</name>
    <dbReference type="NCBI Taxonomy" id="380703"/>
    <lineage>
        <taxon>Bacteria</taxon>
        <taxon>Pseudomonadati</taxon>
        <taxon>Pseudomonadota</taxon>
        <taxon>Gammaproteobacteria</taxon>
        <taxon>Aeromonadales</taxon>
        <taxon>Aeromonadaceae</taxon>
        <taxon>Aeromonas</taxon>
    </lineage>
</organism>
<comment type="function">
    <text evidence="1">Catalyzes the conversion of 1-hydroxy-2-methyl-2-(E)-butenyl 4-diphosphate (HMBPP) into a mixture of isopentenyl diphosphate (IPP) and dimethylallyl diphosphate (DMAPP). Acts in the terminal step of the DOXP/MEP pathway for isoprenoid precursor biosynthesis.</text>
</comment>
<comment type="catalytic activity">
    <reaction evidence="1">
        <text>isopentenyl diphosphate + 2 oxidized [2Fe-2S]-[ferredoxin] + H2O = (2E)-4-hydroxy-3-methylbut-2-enyl diphosphate + 2 reduced [2Fe-2S]-[ferredoxin] + 2 H(+)</text>
        <dbReference type="Rhea" id="RHEA:24488"/>
        <dbReference type="Rhea" id="RHEA-COMP:10000"/>
        <dbReference type="Rhea" id="RHEA-COMP:10001"/>
        <dbReference type="ChEBI" id="CHEBI:15377"/>
        <dbReference type="ChEBI" id="CHEBI:15378"/>
        <dbReference type="ChEBI" id="CHEBI:33737"/>
        <dbReference type="ChEBI" id="CHEBI:33738"/>
        <dbReference type="ChEBI" id="CHEBI:128753"/>
        <dbReference type="ChEBI" id="CHEBI:128769"/>
        <dbReference type="EC" id="1.17.7.4"/>
    </reaction>
</comment>
<comment type="catalytic activity">
    <reaction evidence="1">
        <text>dimethylallyl diphosphate + 2 oxidized [2Fe-2S]-[ferredoxin] + H2O = (2E)-4-hydroxy-3-methylbut-2-enyl diphosphate + 2 reduced [2Fe-2S]-[ferredoxin] + 2 H(+)</text>
        <dbReference type="Rhea" id="RHEA:24825"/>
        <dbReference type="Rhea" id="RHEA-COMP:10000"/>
        <dbReference type="Rhea" id="RHEA-COMP:10001"/>
        <dbReference type="ChEBI" id="CHEBI:15377"/>
        <dbReference type="ChEBI" id="CHEBI:15378"/>
        <dbReference type="ChEBI" id="CHEBI:33737"/>
        <dbReference type="ChEBI" id="CHEBI:33738"/>
        <dbReference type="ChEBI" id="CHEBI:57623"/>
        <dbReference type="ChEBI" id="CHEBI:128753"/>
        <dbReference type="EC" id="1.17.7.4"/>
    </reaction>
</comment>
<comment type="cofactor">
    <cofactor evidence="1">
        <name>[4Fe-4S] cluster</name>
        <dbReference type="ChEBI" id="CHEBI:49883"/>
    </cofactor>
    <text evidence="1">Binds 1 [4Fe-4S] cluster per subunit.</text>
</comment>
<comment type="pathway">
    <text evidence="1">Isoprenoid biosynthesis; dimethylallyl diphosphate biosynthesis; dimethylallyl diphosphate from (2E)-4-hydroxy-3-methylbutenyl diphosphate: step 1/1.</text>
</comment>
<comment type="pathway">
    <text evidence="1">Isoprenoid biosynthesis; isopentenyl diphosphate biosynthesis via DXP pathway; isopentenyl diphosphate from 1-deoxy-D-xylulose 5-phosphate: step 6/6.</text>
</comment>
<comment type="similarity">
    <text evidence="1">Belongs to the IspH family.</text>
</comment>